<feature type="chain" id="PRO_0000391412" description="Smad nuclear interacting protein 1">
    <location>
        <begin position="1"/>
        <end position="389"/>
    </location>
</feature>
<feature type="domain" description="FHA" evidence="4">
    <location>
        <begin position="272"/>
        <end position="335"/>
    </location>
</feature>
<feature type="region of interest" description="Disordered" evidence="5">
    <location>
        <begin position="1"/>
        <end position="212"/>
    </location>
</feature>
<feature type="region of interest" description="Disordered" evidence="5">
    <location>
        <begin position="363"/>
        <end position="389"/>
    </location>
</feature>
<feature type="coiled-coil region" evidence="3">
    <location>
        <begin position="166"/>
        <end position="197"/>
    </location>
</feature>
<feature type="compositionally biased region" description="Basic and acidic residues" evidence="5">
    <location>
        <begin position="1"/>
        <end position="10"/>
    </location>
</feature>
<feature type="compositionally biased region" description="Basic and acidic residues" evidence="5">
    <location>
        <begin position="28"/>
        <end position="43"/>
    </location>
</feature>
<feature type="compositionally biased region" description="Low complexity" evidence="5">
    <location>
        <begin position="54"/>
        <end position="72"/>
    </location>
</feature>
<feature type="compositionally biased region" description="Basic residues" evidence="5">
    <location>
        <begin position="73"/>
        <end position="95"/>
    </location>
</feature>
<feature type="compositionally biased region" description="Basic and acidic residues" evidence="5">
    <location>
        <begin position="103"/>
        <end position="138"/>
    </location>
</feature>
<feature type="compositionally biased region" description="Basic and acidic residues" evidence="5">
    <location>
        <begin position="147"/>
        <end position="163"/>
    </location>
</feature>
<feature type="compositionally biased region" description="Basic and acidic residues" evidence="5">
    <location>
        <begin position="363"/>
        <end position="373"/>
    </location>
</feature>
<feature type="compositionally biased region" description="Acidic residues" evidence="5">
    <location>
        <begin position="374"/>
        <end position="389"/>
    </location>
</feature>
<feature type="modified residue" description="Phosphoserine" evidence="6">
    <location>
        <position position="18"/>
    </location>
</feature>
<feature type="modified residue" description="Phosphoserine" evidence="2">
    <location>
        <position position="33"/>
    </location>
</feature>
<feature type="modified residue" description="Phosphoserine" evidence="6">
    <location>
        <position position="48"/>
    </location>
</feature>
<feature type="modified residue" description="Phosphoserine" evidence="6">
    <location>
        <position position="95"/>
    </location>
</feature>
<feature type="modified residue" description="Phosphoserine" evidence="6">
    <location>
        <position position="149"/>
    </location>
</feature>
<feature type="modified residue" description="Phosphoserine" evidence="2">
    <location>
        <position position="386"/>
    </location>
</feature>
<feature type="cross-link" description="Glycyl lysine isopeptide (Lys-Gly) (interchain with G-Cter in SUMO); alternate" evidence="1">
    <location>
        <position position="28"/>
    </location>
</feature>
<feature type="cross-link" description="Glycyl lysine isopeptide (Lys-Gly) (interchain with G-Cter in SUMO1); alternate" evidence="2">
    <location>
        <position position="28"/>
    </location>
</feature>
<feature type="cross-link" description="Glycyl lysine isopeptide (Lys-Gly) (interchain with G-Cter in SUMO2); alternate" evidence="2">
    <location>
        <position position="28"/>
    </location>
</feature>
<feature type="cross-link" description="Glycyl lysine isopeptide (Lys-Gly) (interchain with G-Cter in SUMO2)" evidence="2">
    <location>
        <position position="104"/>
    </location>
</feature>
<feature type="cross-link" description="Glycyl lysine isopeptide (Lys-Gly) (interchain with G-Cter in SUMO2)" evidence="2">
    <location>
        <position position="214"/>
    </location>
</feature>
<dbReference type="EMBL" id="BC087118">
    <property type="protein sequence ID" value="AAH87118.1"/>
    <property type="molecule type" value="mRNA"/>
</dbReference>
<dbReference type="RefSeq" id="NP_001014091.1">
    <property type="nucleotide sequence ID" value="NM_001014069.1"/>
</dbReference>
<dbReference type="RefSeq" id="XP_017449307.1">
    <property type="nucleotide sequence ID" value="XM_017593818.1"/>
</dbReference>
<dbReference type="RefSeq" id="XP_017458578.1">
    <property type="nucleotide sequence ID" value="XM_017603089.1"/>
</dbReference>
<dbReference type="SMR" id="Q5M9G6"/>
<dbReference type="FunCoup" id="Q5M9G6">
    <property type="interactions" value="3213"/>
</dbReference>
<dbReference type="STRING" id="10116.ENSRNOP00000030728"/>
<dbReference type="iPTMnet" id="Q5M9G6"/>
<dbReference type="PhosphoSitePlus" id="Q5M9G6"/>
<dbReference type="PaxDb" id="10116-ENSRNOP00000030728"/>
<dbReference type="Ensembl" id="ENSRNOT00000037510.6">
    <property type="protein sequence ID" value="ENSRNOP00000030728.4"/>
    <property type="gene ID" value="ENSRNOG00000024889.6"/>
</dbReference>
<dbReference type="GeneID" id="313588"/>
<dbReference type="KEGG" id="rno:313588"/>
<dbReference type="UCSC" id="RGD:1359268">
    <property type="organism name" value="rat"/>
</dbReference>
<dbReference type="AGR" id="RGD:1359268"/>
<dbReference type="CTD" id="79753"/>
<dbReference type="RGD" id="1359268">
    <property type="gene designation" value="Snip1"/>
</dbReference>
<dbReference type="eggNOG" id="KOG1882">
    <property type="taxonomic scope" value="Eukaryota"/>
</dbReference>
<dbReference type="GeneTree" id="ENSGT00940000156553"/>
<dbReference type="HOGENOM" id="CLU_022457_2_0_1"/>
<dbReference type="InParanoid" id="Q5M9G6"/>
<dbReference type="OMA" id="WQKSCWL"/>
<dbReference type="OrthoDB" id="444265at2759"/>
<dbReference type="PhylomeDB" id="Q5M9G6"/>
<dbReference type="TreeFam" id="TF312797"/>
<dbReference type="Reactome" id="R-RNO-72163">
    <property type="pathway name" value="mRNA Splicing - Major Pathway"/>
</dbReference>
<dbReference type="PRO" id="PR:Q5M9G6"/>
<dbReference type="Proteomes" id="UP000002494">
    <property type="component" value="Chromosome 5"/>
</dbReference>
<dbReference type="Bgee" id="ENSRNOG00000024889">
    <property type="expression patterns" value="Expressed in testis and 12 other cell types or tissues"/>
</dbReference>
<dbReference type="GO" id="GO:0005829">
    <property type="term" value="C:cytosol"/>
    <property type="evidence" value="ECO:0007669"/>
    <property type="project" value="Ensembl"/>
</dbReference>
<dbReference type="GO" id="GO:0005654">
    <property type="term" value="C:nucleoplasm"/>
    <property type="evidence" value="ECO:0007669"/>
    <property type="project" value="Ensembl"/>
</dbReference>
<dbReference type="GO" id="GO:0005634">
    <property type="term" value="C:nucleus"/>
    <property type="evidence" value="ECO:0000250"/>
    <property type="project" value="UniProtKB"/>
</dbReference>
<dbReference type="GO" id="GO:0071005">
    <property type="term" value="C:U2-type precatalytic spliceosome"/>
    <property type="evidence" value="ECO:0000250"/>
    <property type="project" value="UniProtKB"/>
</dbReference>
<dbReference type="GO" id="GO:0003729">
    <property type="term" value="F:mRNA binding"/>
    <property type="evidence" value="ECO:0000318"/>
    <property type="project" value="GO_Central"/>
</dbReference>
<dbReference type="GO" id="GO:0140416">
    <property type="term" value="F:transcription regulator inhibitor activity"/>
    <property type="evidence" value="ECO:0000266"/>
    <property type="project" value="RGD"/>
</dbReference>
<dbReference type="GO" id="GO:0035196">
    <property type="term" value="P:miRNA processing"/>
    <property type="evidence" value="ECO:0000250"/>
    <property type="project" value="UniProtKB"/>
</dbReference>
<dbReference type="GO" id="GO:0000398">
    <property type="term" value="P:mRNA splicing, via spliceosome"/>
    <property type="evidence" value="ECO:0000250"/>
    <property type="project" value="UniProtKB"/>
</dbReference>
<dbReference type="GO" id="GO:0043124">
    <property type="term" value="P:negative regulation of canonical NF-kappaB signal transduction"/>
    <property type="evidence" value="ECO:0000266"/>
    <property type="project" value="RGD"/>
</dbReference>
<dbReference type="CDD" id="cd22718">
    <property type="entry name" value="FHA_SNIP1"/>
    <property type="match status" value="1"/>
</dbReference>
<dbReference type="FunFam" id="2.60.200.20:FF:000008">
    <property type="entry name" value="smad nuclear-interacting protein 1"/>
    <property type="match status" value="1"/>
</dbReference>
<dbReference type="Gene3D" id="2.60.200.20">
    <property type="match status" value="1"/>
</dbReference>
<dbReference type="InterPro" id="IPR050923">
    <property type="entry name" value="Cell_Proc_Reg/RNA_Proc"/>
</dbReference>
<dbReference type="InterPro" id="IPR000253">
    <property type="entry name" value="FHA_dom"/>
</dbReference>
<dbReference type="InterPro" id="IPR008984">
    <property type="entry name" value="SMAD_FHA_dom_sf"/>
</dbReference>
<dbReference type="PANTHER" id="PTHR23308">
    <property type="entry name" value="NUCLEAR INHIBITOR OF PROTEIN PHOSPHATASE-1"/>
    <property type="match status" value="1"/>
</dbReference>
<dbReference type="Pfam" id="PF00498">
    <property type="entry name" value="FHA"/>
    <property type="match status" value="1"/>
</dbReference>
<dbReference type="SMART" id="SM00240">
    <property type="entry name" value="FHA"/>
    <property type="match status" value="1"/>
</dbReference>
<dbReference type="SUPFAM" id="SSF49879">
    <property type="entry name" value="SMAD/FHA domain"/>
    <property type="match status" value="1"/>
</dbReference>
<dbReference type="PROSITE" id="PS50006">
    <property type="entry name" value="FHA_DOMAIN"/>
    <property type="match status" value="1"/>
</dbReference>
<gene>
    <name type="primary">Snip1</name>
</gene>
<name>SNIP1_RAT</name>
<sequence length="389" mass="44923">MKAGKSERERSSRRRHRSGDALATVVVKQERLSPEPVAHRRPDAPAASPPPPAAESGSAGHRGSRARGASRSPAKKKSKSSGRRSKSPRTKRSRSPHYSTVKVKQEREDHPRRGREDRQHRELSEQEHRRARNSERDRHRGHARQRRSSDERPVSGQGRDRDSQILQAQEEERDFNNARRREHRQQNESAGAEAQEVIPRPAGNKNKEVPVKEKPSFELSGALLEDTNTFRGVVIKYSEPPEARIPKKRWRLYPFKNDEVLPVMYIHRQSAYLLGRHRRIADIPIDHPSCSKQHAVFQYRLVEYTRADGTVGRRVKPYIIDLGSGNGTFLNNKRIEPQRYYELKEKDVLKFGFSSREYVLLHESSDTSELDRKEDEDEEEEEEMVSDSS</sequence>
<comment type="function">
    <text evidence="2">Required for pre-mRNA splicing as component of the spliceosome. As a component of the minor spliceosome, involved in the splicing of U12-type introns in pre-mRNAs (By similarity). Down-regulates NF-kappa-B signaling by competing with RELA for CREBBP/EP300 binding. Involved in the microRNA (miRNA) biogenesis. May be involved in cyclin-D1/CCND1 mRNA stability through the SNARP complex which associates with both the 3'end of the CCND1 gene and its mRNA.</text>
</comment>
<comment type="subunit">
    <text evidence="2">Component of activated spliceosome complexes. Component of the minor spliceosome, which splices U12-type introns (By similarity). Binds SMAD4 and CREBBP/EP300. Binds the SMAD1/OAZ1/PSMB4 complex. Interacts with DROSHA and SMARCA4. Component of the SNARP complex which consists at least of SNIP1, SNW1, THRAP3, BCLAF1 and PNN.</text>
</comment>
<comment type="subcellular location">
    <subcellularLocation>
        <location evidence="2">Nucleus</location>
    </subcellularLocation>
</comment>
<comment type="PTM">
    <text evidence="1">Degraded by the proteasome upon binding to the SMAD1/OAZ1/PSMB4 complex.</text>
</comment>
<organism>
    <name type="scientific">Rattus norvegicus</name>
    <name type="common">Rat</name>
    <dbReference type="NCBI Taxonomy" id="10116"/>
    <lineage>
        <taxon>Eukaryota</taxon>
        <taxon>Metazoa</taxon>
        <taxon>Chordata</taxon>
        <taxon>Craniata</taxon>
        <taxon>Vertebrata</taxon>
        <taxon>Euteleostomi</taxon>
        <taxon>Mammalia</taxon>
        <taxon>Eutheria</taxon>
        <taxon>Euarchontoglires</taxon>
        <taxon>Glires</taxon>
        <taxon>Rodentia</taxon>
        <taxon>Myomorpha</taxon>
        <taxon>Muroidea</taxon>
        <taxon>Muridae</taxon>
        <taxon>Murinae</taxon>
        <taxon>Rattus</taxon>
    </lineage>
</organism>
<reference key="1">
    <citation type="journal article" date="2004" name="Genome Res.">
        <title>The status, quality, and expansion of the NIH full-length cDNA project: the Mammalian Gene Collection (MGC).</title>
        <authorList>
            <consortium name="The MGC Project Team"/>
        </authorList>
    </citation>
    <scope>NUCLEOTIDE SEQUENCE [LARGE SCALE MRNA]</scope>
    <source>
        <tissue>Lung</tissue>
    </source>
</reference>
<reference key="2">
    <citation type="journal article" date="2012" name="Nat. Commun.">
        <title>Quantitative maps of protein phosphorylation sites across 14 different rat organs and tissues.</title>
        <authorList>
            <person name="Lundby A."/>
            <person name="Secher A."/>
            <person name="Lage K."/>
            <person name="Nordsborg N.B."/>
            <person name="Dmytriyev A."/>
            <person name="Lundby C."/>
            <person name="Olsen J.V."/>
        </authorList>
    </citation>
    <scope>PHOSPHORYLATION [LARGE SCALE ANALYSIS] AT SER-18; SER-48; SER-95 AND SER-149</scope>
    <scope>IDENTIFICATION BY MASS SPECTROMETRY [LARGE SCALE ANALYSIS]</scope>
</reference>
<accession>Q5M9G6</accession>
<proteinExistence type="evidence at protein level"/>
<evidence type="ECO:0000250" key="1"/>
<evidence type="ECO:0000250" key="2">
    <source>
        <dbReference type="UniProtKB" id="Q8TAD8"/>
    </source>
</evidence>
<evidence type="ECO:0000255" key="3"/>
<evidence type="ECO:0000255" key="4">
    <source>
        <dbReference type="PROSITE-ProRule" id="PRU00086"/>
    </source>
</evidence>
<evidence type="ECO:0000256" key="5">
    <source>
        <dbReference type="SAM" id="MobiDB-lite"/>
    </source>
</evidence>
<evidence type="ECO:0007744" key="6">
    <source>
    </source>
</evidence>
<protein>
    <recommendedName>
        <fullName>Smad nuclear interacting protein 1</fullName>
    </recommendedName>
</protein>
<keyword id="KW-0175">Coiled coil</keyword>
<keyword id="KW-1017">Isopeptide bond</keyword>
<keyword id="KW-0507">mRNA processing</keyword>
<keyword id="KW-0508">mRNA splicing</keyword>
<keyword id="KW-0539">Nucleus</keyword>
<keyword id="KW-0597">Phosphoprotein</keyword>
<keyword id="KW-1185">Reference proteome</keyword>
<keyword id="KW-0943">RNA-mediated gene silencing</keyword>
<keyword id="KW-0747">Spliceosome</keyword>
<keyword id="KW-0832">Ubl conjugation</keyword>